<reference key="1">
    <citation type="journal article" date="1999" name="DNA Res.">
        <title>Complete genome sequence of an aerobic hyper-thermophilic crenarchaeon, Aeropyrum pernix K1.</title>
        <authorList>
            <person name="Kawarabayasi Y."/>
            <person name="Hino Y."/>
            <person name="Horikawa H."/>
            <person name="Yamazaki S."/>
            <person name="Haikawa Y."/>
            <person name="Jin-no K."/>
            <person name="Takahashi M."/>
            <person name="Sekine M."/>
            <person name="Baba S."/>
            <person name="Ankai A."/>
            <person name="Kosugi H."/>
            <person name="Hosoyama A."/>
            <person name="Fukui S."/>
            <person name="Nagai Y."/>
            <person name="Nishijima K."/>
            <person name="Nakazawa H."/>
            <person name="Takamiya M."/>
            <person name="Masuda S."/>
            <person name="Funahashi T."/>
            <person name="Tanaka T."/>
            <person name="Kudoh Y."/>
            <person name="Yamazaki J."/>
            <person name="Kushida N."/>
            <person name="Oguchi A."/>
            <person name="Aoki K."/>
            <person name="Kubota K."/>
            <person name="Nakamura Y."/>
            <person name="Nomura N."/>
            <person name="Sako Y."/>
            <person name="Kikuchi H."/>
        </authorList>
    </citation>
    <scope>NUCLEOTIDE SEQUENCE [LARGE SCALE GENOMIC DNA]</scope>
    <source>
        <strain>ATCC 700893 / DSM 11879 / JCM 9820 / NBRC 100138 / K1</strain>
    </source>
</reference>
<gene>
    <name type="ordered locus">APE_0279a.1</name>
    <name type="ORF">APES010</name>
</gene>
<dbReference type="EMBL" id="BA000002">
    <property type="protein sequence ID" value="BAA79233.2"/>
    <property type="molecule type" value="Genomic_DNA"/>
</dbReference>
<dbReference type="PIR" id="E72717">
    <property type="entry name" value="E72717"/>
</dbReference>
<dbReference type="RefSeq" id="WP_010865634.1">
    <property type="nucleotide sequence ID" value="NC_000854.2"/>
</dbReference>
<dbReference type="SMR" id="Q9YFG3"/>
<dbReference type="EnsemblBacteria" id="BAA79233">
    <property type="protein sequence ID" value="BAA79233"/>
    <property type="gene ID" value="APE_0279a.1"/>
</dbReference>
<dbReference type="GeneID" id="1444507"/>
<dbReference type="KEGG" id="ape:APE_0279a.1"/>
<dbReference type="eggNOG" id="arCOG03880">
    <property type="taxonomic scope" value="Archaea"/>
</dbReference>
<dbReference type="Proteomes" id="UP000002518">
    <property type="component" value="Chromosome"/>
</dbReference>
<dbReference type="Gene3D" id="4.10.1150.10">
    <property type="entry name" value="AF2212/PG0164-like"/>
    <property type="match status" value="1"/>
</dbReference>
<dbReference type="InterPro" id="IPR008203">
    <property type="entry name" value="AF2212-like"/>
</dbReference>
<dbReference type="InterPro" id="IPR024069">
    <property type="entry name" value="AF2212-like_dom_sf"/>
</dbReference>
<dbReference type="Pfam" id="PF01954">
    <property type="entry name" value="AF2212-like"/>
    <property type="match status" value="1"/>
</dbReference>
<dbReference type="SUPFAM" id="SSF141694">
    <property type="entry name" value="AF2212/PG0164-like"/>
    <property type="match status" value="1"/>
</dbReference>
<comment type="function">
    <text evidence="1">Possibly the antitoxin component of a type II toxin-antitoxin (TA) system.</text>
</comment>
<comment type="similarity">
    <text evidence="1">Belongs to the UPF0165 family.</text>
</comment>
<organism>
    <name type="scientific">Aeropyrum pernix (strain ATCC 700893 / DSM 11879 / JCM 9820 / NBRC 100138 / K1)</name>
    <dbReference type="NCBI Taxonomy" id="272557"/>
    <lineage>
        <taxon>Archaea</taxon>
        <taxon>Thermoproteota</taxon>
        <taxon>Thermoprotei</taxon>
        <taxon>Desulfurococcales</taxon>
        <taxon>Desulfurococcaceae</taxon>
        <taxon>Aeropyrum</taxon>
    </lineage>
</organism>
<accession>Q9YFG3</accession>
<feature type="chain" id="PRO_0000156844" description="Putative antitoxin APE_0279a.1">
    <location>
        <begin position="1"/>
        <end position="66"/>
    </location>
</feature>
<keyword id="KW-1185">Reference proteome</keyword>
<keyword id="KW-1277">Toxin-antitoxin system</keyword>
<name>Y010_AERPE</name>
<protein>
    <recommendedName>
        <fullName>Putative antitoxin APE_0279a.1</fullName>
    </recommendedName>
</protein>
<evidence type="ECO:0000305" key="1"/>
<proteinExistence type="inferred from homology"/>
<sequence>MSKVIRVRYEKGVLKPLEPVNLEDGEEVDIIIRENLAELARRIRRRLSQEREEPSEILSRERSRLA</sequence>